<accession>Q5M9B1</accession>
<keyword id="KW-0539">Nucleus</keyword>
<keyword id="KW-1185">Reference proteome</keyword>
<keyword id="KW-0833">Ubl conjugation pathway</keyword>
<comment type="function">
    <text evidence="1">Substrate-recognition component of a cullin-5-RING E3 ubiquitin-protein ligase complex (ECS complex, also named CRL5 complex), which mediates the ubiquitination and subsequent proteasomal degradation of target proteins.</text>
</comment>
<comment type="pathway">
    <text evidence="1">Protein modification; protein ubiquitination.</text>
</comment>
<comment type="subunit">
    <text evidence="1">Substrate-recognition component of the ECS(SPSB3) complex, composed of spsb3, cul5, elob, elob and rnf7/rbx2.</text>
</comment>
<comment type="subcellular location">
    <subcellularLocation>
        <location evidence="1">Nucleus</location>
    </subcellularLocation>
</comment>
<comment type="domain">
    <text evidence="1">The SOCS box domain mediates the interaction with the Elongin BC complex, an adapter module in different E3 ubiquitin ligase complexes.</text>
</comment>
<comment type="similarity">
    <text evidence="5">Belongs to the SPSB family.</text>
</comment>
<evidence type="ECO:0000250" key="1">
    <source>
        <dbReference type="UniProtKB" id="Q6PJ21"/>
    </source>
</evidence>
<evidence type="ECO:0000255" key="2">
    <source>
        <dbReference type="PROSITE-ProRule" id="PRU00194"/>
    </source>
</evidence>
<evidence type="ECO:0000255" key="3">
    <source>
        <dbReference type="PROSITE-ProRule" id="PRU00548"/>
    </source>
</evidence>
<evidence type="ECO:0000256" key="4">
    <source>
        <dbReference type="SAM" id="MobiDB-lite"/>
    </source>
</evidence>
<evidence type="ECO:0000305" key="5"/>
<organism>
    <name type="scientific">Xenopus laevis</name>
    <name type="common">African clawed frog</name>
    <dbReference type="NCBI Taxonomy" id="8355"/>
    <lineage>
        <taxon>Eukaryota</taxon>
        <taxon>Metazoa</taxon>
        <taxon>Chordata</taxon>
        <taxon>Craniata</taxon>
        <taxon>Vertebrata</taxon>
        <taxon>Euteleostomi</taxon>
        <taxon>Amphibia</taxon>
        <taxon>Batrachia</taxon>
        <taxon>Anura</taxon>
        <taxon>Pipoidea</taxon>
        <taxon>Pipidae</taxon>
        <taxon>Xenopodinae</taxon>
        <taxon>Xenopus</taxon>
        <taxon>Xenopus</taxon>
    </lineage>
</organism>
<proteinExistence type="evidence at transcript level"/>
<feature type="chain" id="PRO_0000278780" description="SPRY domain-containing SOCS box protein 3">
    <location>
        <begin position="1"/>
        <end position="360"/>
    </location>
</feature>
<feature type="domain" description="B30.2/SPRY" evidence="3">
    <location>
        <begin position="84"/>
        <end position="274"/>
    </location>
</feature>
<feature type="domain" description="SOCS box" evidence="2">
    <location>
        <begin position="264"/>
        <end position="315"/>
    </location>
</feature>
<feature type="region of interest" description="Disordered" evidence="4">
    <location>
        <begin position="21"/>
        <end position="54"/>
    </location>
</feature>
<feature type="region of interest" description="Disordered" evidence="4">
    <location>
        <begin position="322"/>
        <end position="350"/>
    </location>
</feature>
<feature type="compositionally biased region" description="Polar residues" evidence="4">
    <location>
        <begin position="332"/>
        <end position="346"/>
    </location>
</feature>
<dbReference type="EMBL" id="BC087357">
    <property type="protein sequence ID" value="AAH87357.1"/>
    <property type="molecule type" value="mRNA"/>
</dbReference>
<dbReference type="RefSeq" id="NP_001088836.1">
    <property type="nucleotide sequence ID" value="NM_001095367.1"/>
</dbReference>
<dbReference type="RefSeq" id="XP_018090047.1">
    <property type="nucleotide sequence ID" value="XM_018234558.1"/>
</dbReference>
<dbReference type="SMR" id="Q5M9B1"/>
<dbReference type="DNASU" id="496145"/>
<dbReference type="GeneID" id="496145"/>
<dbReference type="KEGG" id="xla:496145"/>
<dbReference type="AGR" id="Xenbase:XB-GENE-971067"/>
<dbReference type="CTD" id="496145"/>
<dbReference type="Xenbase" id="XB-GENE-971067">
    <property type="gene designation" value="spsb3.L"/>
</dbReference>
<dbReference type="OMA" id="TECNILA"/>
<dbReference type="OrthoDB" id="5951542at2759"/>
<dbReference type="UniPathway" id="UPA00143"/>
<dbReference type="Proteomes" id="UP000186698">
    <property type="component" value="Chromosome 9_10L"/>
</dbReference>
<dbReference type="Bgee" id="496145">
    <property type="expression patterns" value="Expressed in testis and 19 other cell types or tissues"/>
</dbReference>
<dbReference type="GO" id="GO:0031466">
    <property type="term" value="C:Cul5-RING ubiquitin ligase complex"/>
    <property type="evidence" value="ECO:0000250"/>
    <property type="project" value="UniProtKB"/>
</dbReference>
<dbReference type="GO" id="GO:0005634">
    <property type="term" value="C:nucleus"/>
    <property type="evidence" value="ECO:0000250"/>
    <property type="project" value="UniProtKB"/>
</dbReference>
<dbReference type="GO" id="GO:0019005">
    <property type="term" value="C:SCF ubiquitin ligase complex"/>
    <property type="evidence" value="ECO:0000318"/>
    <property type="project" value="GO_Central"/>
</dbReference>
<dbReference type="GO" id="GO:1990756">
    <property type="term" value="F:ubiquitin-like ligase-substrate adaptor activity"/>
    <property type="evidence" value="ECO:0000250"/>
    <property type="project" value="UniProtKB"/>
</dbReference>
<dbReference type="GO" id="GO:0160049">
    <property type="term" value="P:negative regulation of cGAS/STING signaling pathway"/>
    <property type="evidence" value="ECO:0000250"/>
    <property type="project" value="UniProtKB"/>
</dbReference>
<dbReference type="GO" id="GO:0010719">
    <property type="term" value="P:negative regulation of epithelial to mesenchymal transition"/>
    <property type="evidence" value="ECO:0000250"/>
    <property type="project" value="UniProtKB"/>
</dbReference>
<dbReference type="GO" id="GO:0043161">
    <property type="term" value="P:proteasome-mediated ubiquitin-dependent protein catabolic process"/>
    <property type="evidence" value="ECO:0000250"/>
    <property type="project" value="UniProtKB"/>
</dbReference>
<dbReference type="GO" id="GO:0070936">
    <property type="term" value="P:protein K48-linked ubiquitination"/>
    <property type="evidence" value="ECO:0000250"/>
    <property type="project" value="UniProtKB"/>
</dbReference>
<dbReference type="CDD" id="cd12876">
    <property type="entry name" value="SPRY_SOCS3"/>
    <property type="match status" value="1"/>
</dbReference>
<dbReference type="FunFam" id="2.60.120.920:FF:000018">
    <property type="entry name" value="SPRY domain-containing SOCS box protein 3 isoform X2"/>
    <property type="match status" value="1"/>
</dbReference>
<dbReference type="Gene3D" id="2.60.120.920">
    <property type="match status" value="1"/>
</dbReference>
<dbReference type="InterPro" id="IPR001870">
    <property type="entry name" value="B30.2/SPRY"/>
</dbReference>
<dbReference type="InterPro" id="IPR043136">
    <property type="entry name" value="B30.2/SPRY_sf"/>
</dbReference>
<dbReference type="InterPro" id="IPR013320">
    <property type="entry name" value="ConA-like_dom_sf"/>
</dbReference>
<dbReference type="InterPro" id="IPR050672">
    <property type="entry name" value="FBXO45-Fsn/SPSB_families"/>
</dbReference>
<dbReference type="InterPro" id="IPR001496">
    <property type="entry name" value="SOCS_box"/>
</dbReference>
<dbReference type="InterPro" id="IPR003877">
    <property type="entry name" value="SPRY_dom"/>
</dbReference>
<dbReference type="InterPro" id="IPR035754">
    <property type="entry name" value="SPRY_SPSB3"/>
</dbReference>
<dbReference type="PANTHER" id="PTHR12245">
    <property type="entry name" value="SPRY DOMAIN CONTAINING SOCS BOX PROTEIN"/>
    <property type="match status" value="1"/>
</dbReference>
<dbReference type="PANTHER" id="PTHR12245:SF5">
    <property type="entry name" value="SPRY DOMAIN-CONTAINING SOCS BOX PROTEIN 3"/>
    <property type="match status" value="1"/>
</dbReference>
<dbReference type="Pfam" id="PF00622">
    <property type="entry name" value="SPRY"/>
    <property type="match status" value="1"/>
</dbReference>
<dbReference type="SMART" id="SM00449">
    <property type="entry name" value="SPRY"/>
    <property type="match status" value="1"/>
</dbReference>
<dbReference type="SUPFAM" id="SSF49899">
    <property type="entry name" value="Concanavalin A-like lectins/glucanases"/>
    <property type="match status" value="1"/>
</dbReference>
<dbReference type="PROSITE" id="PS50188">
    <property type="entry name" value="B302_SPRY"/>
    <property type="match status" value="1"/>
</dbReference>
<dbReference type="PROSITE" id="PS50225">
    <property type="entry name" value="SOCS"/>
    <property type="match status" value="1"/>
</dbReference>
<protein>
    <recommendedName>
        <fullName>SPRY domain-containing SOCS box protein 3</fullName>
        <shortName>SSB-3</shortName>
    </recommendedName>
</protein>
<sequence>MARRPRNSRAWRFVLSGVRRDQDGRSPALHAEEEAWGYDSDGQHSNSDSDTDLLTLPPSIPSAVPVTGESYCDCDSQNDPYCSSLHPFRQIKSCQCGEEDNYFDWVWDDCSKSTATVLSCDDRKVSFHMEYSCGTAAIRGNKMLTEGQHFWEIKMTSPVYGTDMMVGIGTSDVNLDKYRHTFCSLLGKDAESWGLSYTGLLQHKGDKSNFSSRFGQGSIIGVHLDTWHGVLTFYKNRKRIGVAATQLRNKKLFPLVCSTAAKSSMKVIRSCCCRTSLQYLCCARLRQLLPGSVDSLEVLPLPPGLKQVLSNKLGWVLQMGSNRSSQHKGDGSATTSCGSYSDSSCTPGHDNCQRKRCRRI</sequence>
<name>SPSB3_XENLA</name>
<reference key="1">
    <citation type="submission" date="2004-12" db="EMBL/GenBank/DDBJ databases">
        <authorList>
            <consortium name="NIH - Xenopus Gene Collection (XGC) project"/>
        </authorList>
    </citation>
    <scope>NUCLEOTIDE SEQUENCE [LARGE SCALE MRNA]</scope>
    <source>
        <tissue>Testis</tissue>
    </source>
</reference>
<gene>
    <name type="primary">spsb3</name>
</gene>